<comment type="subcellular location">
    <subcellularLocation>
        <location evidence="1">Cell membrane</location>
        <topology evidence="1">Multi-pass membrane protein</topology>
    </subcellularLocation>
</comment>
<comment type="similarity">
    <text evidence="1">Belongs to the UPF0756 family.</text>
</comment>
<gene>
    <name evidence="1" type="primary">yeaL</name>
    <name type="ordered locus">ECIAI1_1853</name>
</gene>
<protein>
    <recommendedName>
        <fullName evidence="1">UPF0756 membrane protein YeaL</fullName>
    </recommendedName>
</protein>
<dbReference type="EMBL" id="CU928160">
    <property type="protein sequence ID" value="CAQ98708.1"/>
    <property type="molecule type" value="Genomic_DNA"/>
</dbReference>
<dbReference type="RefSeq" id="WP_000460707.1">
    <property type="nucleotide sequence ID" value="NC_011741.1"/>
</dbReference>
<dbReference type="KEGG" id="ecr:ECIAI1_1853"/>
<dbReference type="HOGENOM" id="CLU_125889_0_0_6"/>
<dbReference type="GO" id="GO:0005886">
    <property type="term" value="C:plasma membrane"/>
    <property type="evidence" value="ECO:0007669"/>
    <property type="project" value="UniProtKB-SubCell"/>
</dbReference>
<dbReference type="HAMAP" id="MF_01874">
    <property type="entry name" value="UPF0756"/>
    <property type="match status" value="1"/>
</dbReference>
<dbReference type="InterPro" id="IPR007382">
    <property type="entry name" value="UPF0756_TM"/>
</dbReference>
<dbReference type="PANTHER" id="PTHR38452">
    <property type="entry name" value="UPF0756 MEMBRANE PROTEIN YEAL"/>
    <property type="match status" value="1"/>
</dbReference>
<dbReference type="PANTHER" id="PTHR38452:SF1">
    <property type="entry name" value="UPF0756 MEMBRANE PROTEIN YEAL"/>
    <property type="match status" value="1"/>
</dbReference>
<dbReference type="Pfam" id="PF04284">
    <property type="entry name" value="DUF441"/>
    <property type="match status" value="1"/>
</dbReference>
<reference key="1">
    <citation type="journal article" date="2009" name="PLoS Genet.">
        <title>Organised genome dynamics in the Escherichia coli species results in highly diverse adaptive paths.</title>
        <authorList>
            <person name="Touchon M."/>
            <person name="Hoede C."/>
            <person name="Tenaillon O."/>
            <person name="Barbe V."/>
            <person name="Baeriswyl S."/>
            <person name="Bidet P."/>
            <person name="Bingen E."/>
            <person name="Bonacorsi S."/>
            <person name="Bouchier C."/>
            <person name="Bouvet O."/>
            <person name="Calteau A."/>
            <person name="Chiapello H."/>
            <person name="Clermont O."/>
            <person name="Cruveiller S."/>
            <person name="Danchin A."/>
            <person name="Diard M."/>
            <person name="Dossat C."/>
            <person name="Karoui M.E."/>
            <person name="Frapy E."/>
            <person name="Garry L."/>
            <person name="Ghigo J.M."/>
            <person name="Gilles A.M."/>
            <person name="Johnson J."/>
            <person name="Le Bouguenec C."/>
            <person name="Lescat M."/>
            <person name="Mangenot S."/>
            <person name="Martinez-Jehanne V."/>
            <person name="Matic I."/>
            <person name="Nassif X."/>
            <person name="Oztas S."/>
            <person name="Petit M.A."/>
            <person name="Pichon C."/>
            <person name="Rouy Z."/>
            <person name="Ruf C.S."/>
            <person name="Schneider D."/>
            <person name="Tourret J."/>
            <person name="Vacherie B."/>
            <person name="Vallenet D."/>
            <person name="Medigue C."/>
            <person name="Rocha E.P.C."/>
            <person name="Denamur E."/>
        </authorList>
    </citation>
    <scope>NUCLEOTIDE SEQUENCE [LARGE SCALE GENOMIC DNA]</scope>
    <source>
        <strain>IAI1</strain>
    </source>
</reference>
<feature type="chain" id="PRO_0000388871" description="UPF0756 membrane protein YeaL">
    <location>
        <begin position="1"/>
        <end position="148"/>
    </location>
</feature>
<feature type="transmembrane region" description="Helical" evidence="1">
    <location>
        <begin position="14"/>
        <end position="34"/>
    </location>
</feature>
<feature type="transmembrane region" description="Helical" evidence="1">
    <location>
        <begin position="51"/>
        <end position="71"/>
    </location>
</feature>
<feature type="transmembrane region" description="Helical" evidence="1">
    <location>
        <begin position="86"/>
        <end position="106"/>
    </location>
</feature>
<feature type="transmembrane region" description="Helical" evidence="1">
    <location>
        <begin position="121"/>
        <end position="141"/>
    </location>
</feature>
<proteinExistence type="inferred from homology"/>
<sequence>MFDVTLLILLGLAALGFISHNTTVAVSILVLIIVRVTPLSTFFPWIEKQGLSIGIIILTIGVMAPIASGTLPPSTLIHSFLNWKSLVAIAVGVIVSWLGGRGVTLMGSQPQLVAGLLVGTVLGVALFRGVPVGPLIAAGLVSLIVGKQ</sequence>
<name>YEAL_ECO8A</name>
<evidence type="ECO:0000255" key="1">
    <source>
        <dbReference type="HAMAP-Rule" id="MF_01874"/>
    </source>
</evidence>
<keyword id="KW-1003">Cell membrane</keyword>
<keyword id="KW-0472">Membrane</keyword>
<keyword id="KW-0812">Transmembrane</keyword>
<keyword id="KW-1133">Transmembrane helix</keyword>
<accession>B7M1K3</accession>
<organism>
    <name type="scientific">Escherichia coli O8 (strain IAI1)</name>
    <dbReference type="NCBI Taxonomy" id="585034"/>
    <lineage>
        <taxon>Bacteria</taxon>
        <taxon>Pseudomonadati</taxon>
        <taxon>Pseudomonadota</taxon>
        <taxon>Gammaproteobacteria</taxon>
        <taxon>Enterobacterales</taxon>
        <taxon>Enterobacteriaceae</taxon>
        <taxon>Escherichia</taxon>
    </lineage>
</organism>